<proteinExistence type="evidence at protein level"/>
<dbReference type="EC" id="3.1.4.1" evidence="8"/>
<dbReference type="EC" id="3.6.1.-" evidence="1"/>
<dbReference type="EC" id="3.6.1.9" evidence="1"/>
<dbReference type="EMBL" id="Z47987">
    <property type="protein sequence ID" value="CAA88029.1"/>
    <property type="molecule type" value="mRNA"/>
</dbReference>
<dbReference type="EMBL" id="U78787">
    <property type="protein sequence ID" value="AAB61535.1"/>
    <property type="molecule type" value="mRNA"/>
</dbReference>
<dbReference type="EMBL" id="U78788">
    <property type="protein sequence ID" value="AAB61536.1"/>
    <property type="molecule type" value="mRNA"/>
</dbReference>
<dbReference type="EMBL" id="D30649">
    <property type="protein sequence ID" value="BAA06333.1"/>
    <property type="molecule type" value="mRNA"/>
</dbReference>
<dbReference type="EMBL" id="BC097326">
    <property type="protein sequence ID" value="AAH97326.1"/>
    <property type="molecule type" value="mRNA"/>
</dbReference>
<dbReference type="PIR" id="A57080">
    <property type="entry name" value="A57080"/>
</dbReference>
<dbReference type="RefSeq" id="NP_062243.2">
    <property type="nucleotide sequence ID" value="NM_019370.2"/>
</dbReference>
<dbReference type="PDB" id="6F2T">
    <property type="method" value="X-ray"/>
    <property type="resolution" value="2.40 A"/>
    <property type="chains" value="A/B=140-875"/>
</dbReference>
<dbReference type="PDB" id="6F2V">
    <property type="method" value="X-ray"/>
    <property type="resolution" value="2.50 A"/>
    <property type="chains" value="A/B=140-875"/>
</dbReference>
<dbReference type="PDB" id="6F2Y">
    <property type="method" value="X-ray"/>
    <property type="resolution" value="2.40 A"/>
    <property type="chains" value="A/B=140-875"/>
</dbReference>
<dbReference type="PDB" id="6F30">
    <property type="method" value="X-ray"/>
    <property type="resolution" value="2.30 A"/>
    <property type="chains" value="A/B=140-875"/>
</dbReference>
<dbReference type="PDB" id="6F33">
    <property type="method" value="X-ray"/>
    <property type="resolution" value="3.00 A"/>
    <property type="chains" value="A/B=140-875"/>
</dbReference>
<dbReference type="PDB" id="6G4G">
    <property type="method" value="X-ray"/>
    <property type="resolution" value="2.80 A"/>
    <property type="chains" value="A/B/C/D=49-875"/>
</dbReference>
<dbReference type="PDBsum" id="6F2T"/>
<dbReference type="PDBsum" id="6F2V"/>
<dbReference type="PDBsum" id="6F2Y"/>
<dbReference type="PDBsum" id="6F30"/>
<dbReference type="PDBsum" id="6F33"/>
<dbReference type="PDBsum" id="6G4G"/>
<dbReference type="SMR" id="P97675"/>
<dbReference type="FunCoup" id="P97675">
    <property type="interactions" value="148"/>
</dbReference>
<dbReference type="STRING" id="10116.ENSRNOP00000018695"/>
<dbReference type="GlyCosmos" id="P97675">
    <property type="glycosylation" value="8 sites, No reported glycans"/>
</dbReference>
<dbReference type="GlyGen" id="P97675">
    <property type="glycosylation" value="8 sites"/>
</dbReference>
<dbReference type="iPTMnet" id="P97675"/>
<dbReference type="PhosphoSitePlus" id="P97675"/>
<dbReference type="PaxDb" id="10116-ENSRNOP00000018695"/>
<dbReference type="GeneID" id="54410"/>
<dbReference type="KEGG" id="rno:54410"/>
<dbReference type="AGR" id="RGD:708511"/>
<dbReference type="CTD" id="5169"/>
<dbReference type="RGD" id="708511">
    <property type="gene designation" value="Enpp3"/>
</dbReference>
<dbReference type="VEuPathDB" id="HostDB:ENSRNOG00000013791"/>
<dbReference type="eggNOG" id="KOG2645">
    <property type="taxonomic scope" value="Eukaryota"/>
</dbReference>
<dbReference type="HOGENOM" id="CLU_012256_0_1_1"/>
<dbReference type="InParanoid" id="P97675"/>
<dbReference type="OrthoDB" id="7368at9989"/>
<dbReference type="PhylomeDB" id="P97675"/>
<dbReference type="TreeFam" id="TF330032"/>
<dbReference type="BRENDA" id="3.6.1.9">
    <property type="organism ID" value="5301"/>
</dbReference>
<dbReference type="SABIO-RK" id="P97675"/>
<dbReference type="PRO" id="PR:P97675"/>
<dbReference type="Proteomes" id="UP000002494">
    <property type="component" value="Chromosome 1"/>
</dbReference>
<dbReference type="Bgee" id="ENSRNOG00000013791">
    <property type="expression patterns" value="Expressed in duodenum and 19 other cell types or tissues"/>
</dbReference>
<dbReference type="GO" id="GO:0016324">
    <property type="term" value="C:apical plasma membrane"/>
    <property type="evidence" value="ECO:0007669"/>
    <property type="project" value="UniProtKB-SubCell"/>
</dbReference>
<dbReference type="GO" id="GO:0009986">
    <property type="term" value="C:cell surface"/>
    <property type="evidence" value="ECO:0000304"/>
    <property type="project" value="RGD"/>
</dbReference>
<dbReference type="GO" id="GO:0009897">
    <property type="term" value="C:external side of plasma membrane"/>
    <property type="evidence" value="ECO:0000250"/>
    <property type="project" value="UniProtKB"/>
</dbReference>
<dbReference type="GO" id="GO:0005576">
    <property type="term" value="C:extracellular region"/>
    <property type="evidence" value="ECO:0007669"/>
    <property type="project" value="UniProtKB-SubCell"/>
</dbReference>
<dbReference type="GO" id="GO:0048471">
    <property type="term" value="C:perinuclear region of cytoplasm"/>
    <property type="evidence" value="ECO:0000266"/>
    <property type="project" value="RGD"/>
</dbReference>
<dbReference type="GO" id="GO:0005886">
    <property type="term" value="C:plasma membrane"/>
    <property type="evidence" value="ECO:0000250"/>
    <property type="project" value="UniProtKB"/>
</dbReference>
<dbReference type="GO" id="GO:0005524">
    <property type="term" value="F:ATP binding"/>
    <property type="evidence" value="ECO:0007669"/>
    <property type="project" value="UniProtKB-KW"/>
</dbReference>
<dbReference type="GO" id="GO:0047693">
    <property type="term" value="F:ATP diphosphatase activity"/>
    <property type="evidence" value="ECO:0007669"/>
    <property type="project" value="RHEA"/>
</dbReference>
<dbReference type="GO" id="GO:0034432">
    <property type="term" value="F:bis(5'-adenosyl)-pentaphosphatase activity"/>
    <property type="evidence" value="ECO:0000250"/>
    <property type="project" value="UniProtKB"/>
</dbReference>
<dbReference type="GO" id="GO:0047710">
    <property type="term" value="F:bis(5'-adenosyl)-triphosphatase activity"/>
    <property type="evidence" value="ECO:0000250"/>
    <property type="project" value="UniProtKB"/>
</dbReference>
<dbReference type="GO" id="GO:0004081">
    <property type="term" value="F:bis(5'-nucleosyl)-tetraphosphatase (asymmetrical) activity"/>
    <property type="evidence" value="ECO:0000250"/>
    <property type="project" value="UniProtKB"/>
</dbReference>
<dbReference type="GO" id="GO:0005509">
    <property type="term" value="F:calcium ion binding"/>
    <property type="evidence" value="ECO:0000250"/>
    <property type="project" value="UniProtKB"/>
</dbReference>
<dbReference type="GO" id="GO:0004551">
    <property type="term" value="F:dinucleotide phosphatase activity"/>
    <property type="evidence" value="ECO:0000304"/>
    <property type="project" value="RGD"/>
</dbReference>
<dbReference type="GO" id="GO:0036219">
    <property type="term" value="F:GTP diphosphatase activity"/>
    <property type="evidence" value="ECO:0007669"/>
    <property type="project" value="RHEA"/>
</dbReference>
<dbReference type="GO" id="GO:0003676">
    <property type="term" value="F:nucleic acid binding"/>
    <property type="evidence" value="ECO:0007669"/>
    <property type="project" value="InterPro"/>
</dbReference>
<dbReference type="GO" id="GO:0047429">
    <property type="term" value="F:nucleoside triphosphate diphosphatase activity"/>
    <property type="evidence" value="ECO:0000250"/>
    <property type="project" value="UniProtKB"/>
</dbReference>
<dbReference type="GO" id="GO:0004528">
    <property type="term" value="F:phosphodiesterase I activity"/>
    <property type="evidence" value="ECO:0000250"/>
    <property type="project" value="UniProtKB"/>
</dbReference>
<dbReference type="GO" id="GO:0036221">
    <property type="term" value="F:UTP diphosphatase activity"/>
    <property type="evidence" value="ECO:0007669"/>
    <property type="project" value="RHEA"/>
</dbReference>
<dbReference type="GO" id="GO:0008270">
    <property type="term" value="F:zinc ion binding"/>
    <property type="evidence" value="ECO:0000250"/>
    <property type="project" value="UniProtKB"/>
</dbReference>
<dbReference type="GO" id="GO:0046034">
    <property type="term" value="P:ATP metabolic process"/>
    <property type="evidence" value="ECO:0000250"/>
    <property type="project" value="UniProtKB"/>
</dbReference>
<dbReference type="GO" id="GO:0002276">
    <property type="term" value="P:basophil activation involved in immune response"/>
    <property type="evidence" value="ECO:0000250"/>
    <property type="project" value="UniProtKB"/>
</dbReference>
<dbReference type="GO" id="GO:0050728">
    <property type="term" value="P:negative regulation of inflammatory response"/>
    <property type="evidence" value="ECO:0000250"/>
    <property type="project" value="UniProtKB"/>
</dbReference>
<dbReference type="GO" id="GO:0033007">
    <property type="term" value="P:negative regulation of mast cell activation involved in immune response"/>
    <property type="evidence" value="ECO:0000250"/>
    <property type="project" value="UniProtKB"/>
</dbReference>
<dbReference type="GO" id="GO:0070667">
    <property type="term" value="P:negative regulation of mast cell proliferation"/>
    <property type="evidence" value="ECO:0000250"/>
    <property type="project" value="UniProtKB"/>
</dbReference>
<dbReference type="GO" id="GO:0009143">
    <property type="term" value="P:nucleoside triphosphate catabolic process"/>
    <property type="evidence" value="ECO:0000266"/>
    <property type="project" value="RGD"/>
</dbReference>
<dbReference type="GO" id="GO:0055062">
    <property type="term" value="P:phosphate ion homeostasis"/>
    <property type="evidence" value="ECO:0000266"/>
    <property type="project" value="RGD"/>
</dbReference>
<dbReference type="GO" id="GO:0006796">
    <property type="term" value="P:phosphate-containing compound metabolic process"/>
    <property type="evidence" value="ECO:0000266"/>
    <property type="project" value="RGD"/>
</dbReference>
<dbReference type="GO" id="GO:0006220">
    <property type="term" value="P:pyrimidine nucleotide metabolic process"/>
    <property type="evidence" value="ECO:0000250"/>
    <property type="project" value="UniProtKB"/>
</dbReference>
<dbReference type="GO" id="GO:0051150">
    <property type="term" value="P:regulation of smooth muscle cell differentiation"/>
    <property type="evidence" value="ECO:0000303"/>
    <property type="project" value="RGD"/>
</dbReference>
<dbReference type="CDD" id="cd16018">
    <property type="entry name" value="Enpp"/>
    <property type="match status" value="1"/>
</dbReference>
<dbReference type="CDD" id="cd00091">
    <property type="entry name" value="NUC"/>
    <property type="match status" value="1"/>
</dbReference>
<dbReference type="DisProt" id="DP02743"/>
<dbReference type="FunFam" id="3.40.720.10:FF:000010">
    <property type="entry name" value="Ectonucleotide pyrophosphatase/phosphodiesterase family member 1"/>
    <property type="match status" value="1"/>
</dbReference>
<dbReference type="FunFam" id="4.10.410.20:FF:000001">
    <property type="entry name" value="Ectonucleotide pyrophosphatase/phosphodiesterase family member 2"/>
    <property type="match status" value="1"/>
</dbReference>
<dbReference type="FunFam" id="3.40.570.10:FF:000005">
    <property type="entry name" value="ectonucleotide pyrophosphatase/phosphodiesterase family member 3"/>
    <property type="match status" value="1"/>
</dbReference>
<dbReference type="FunFam" id="4.10.410.20:FF:000004">
    <property type="entry name" value="ectonucleotide pyrophosphatase/phosphodiesterase family member 3"/>
    <property type="match status" value="1"/>
</dbReference>
<dbReference type="Gene3D" id="4.10.410.20">
    <property type="match status" value="2"/>
</dbReference>
<dbReference type="Gene3D" id="3.40.720.10">
    <property type="entry name" value="Alkaline Phosphatase, subunit A"/>
    <property type="match status" value="1"/>
</dbReference>
<dbReference type="Gene3D" id="3.40.570.10">
    <property type="entry name" value="Extracellular Endonuclease, subunit A"/>
    <property type="match status" value="1"/>
</dbReference>
<dbReference type="InterPro" id="IPR017850">
    <property type="entry name" value="Alkaline_phosphatase_core_sf"/>
</dbReference>
<dbReference type="InterPro" id="IPR044929">
    <property type="entry name" value="DNA/RNA_non-sp_Endonuclease_sf"/>
</dbReference>
<dbReference type="InterPro" id="IPR001604">
    <property type="entry name" value="Endo_G_ENPP1-like_dom"/>
</dbReference>
<dbReference type="InterPro" id="IPR020821">
    <property type="entry name" value="ENPP1-3/EXOG-like_nuc-like"/>
</dbReference>
<dbReference type="InterPro" id="IPR044925">
    <property type="entry name" value="His-Me_finger_sf"/>
</dbReference>
<dbReference type="InterPro" id="IPR002591">
    <property type="entry name" value="Phosphodiest/P_Trfase"/>
</dbReference>
<dbReference type="InterPro" id="IPR036024">
    <property type="entry name" value="Somatomedin_B-like_dom_sf"/>
</dbReference>
<dbReference type="InterPro" id="IPR001212">
    <property type="entry name" value="Somatomedin_B_dom"/>
</dbReference>
<dbReference type="PANTHER" id="PTHR10151">
    <property type="entry name" value="ECTONUCLEOTIDE PYROPHOSPHATASE/PHOSPHODIESTERASE"/>
    <property type="match status" value="1"/>
</dbReference>
<dbReference type="PANTHER" id="PTHR10151:SF107">
    <property type="entry name" value="ECTONUCLEOTIDE PYROPHOSPHATASE_PHOSPHODIESTERASE FAMILY MEMBER 3"/>
    <property type="match status" value="1"/>
</dbReference>
<dbReference type="Pfam" id="PF01663">
    <property type="entry name" value="Phosphodiest"/>
    <property type="match status" value="1"/>
</dbReference>
<dbReference type="Pfam" id="PF01033">
    <property type="entry name" value="Somatomedin_B"/>
    <property type="match status" value="2"/>
</dbReference>
<dbReference type="SMART" id="SM00892">
    <property type="entry name" value="Endonuclease_NS"/>
    <property type="match status" value="1"/>
</dbReference>
<dbReference type="SMART" id="SM00477">
    <property type="entry name" value="NUC"/>
    <property type="match status" value="1"/>
</dbReference>
<dbReference type="SMART" id="SM00201">
    <property type="entry name" value="SO"/>
    <property type="match status" value="2"/>
</dbReference>
<dbReference type="SUPFAM" id="SSF53649">
    <property type="entry name" value="Alkaline phosphatase-like"/>
    <property type="match status" value="1"/>
</dbReference>
<dbReference type="SUPFAM" id="SSF54060">
    <property type="entry name" value="His-Me finger endonucleases"/>
    <property type="match status" value="1"/>
</dbReference>
<dbReference type="SUPFAM" id="SSF90188">
    <property type="entry name" value="Somatomedin B domain"/>
    <property type="match status" value="2"/>
</dbReference>
<dbReference type="PROSITE" id="PS00524">
    <property type="entry name" value="SMB_1"/>
    <property type="match status" value="2"/>
</dbReference>
<dbReference type="PROSITE" id="PS50958">
    <property type="entry name" value="SMB_2"/>
    <property type="match status" value="2"/>
</dbReference>
<accession>P97675</accession>
<accession>P70641</accession>
<accession>P97676</accession>
<accession>Q4V8L6</accession>
<accession>Q63490</accession>
<sequence>MDSRLALATEEPIKKDSLKRYKILCAVLLALLVIVSLGLGLGLGLRKPEEHIGSCRKKCFDSSHRGLEGCRCDSGCTDRGDCCWDFEDTCVKSTQIWTCNSFRCGETRLEAALCSCADDCLQRKDCCTDYKAVCQGEVPWVTEACASSQEPQCPEGFDQPPVILFSMDGFRAEYLQTWSTLLPNINKLKTCGLHSKYMRAMYPTKTFPNHYTIVTGLYPESHGIIDNNMYDVYLNKNFSLSSVEKSNPAWWSGQPIWLTAMYQGLKAASYYWPGSDVAVNGSFPNIYRNYSNSVPYESRIATLLQWLDLPKAERPSFYTIYVEEPDSAGHKSGPVSAGVIKALQLVDDAFGMLMEGLKQRNLHNCVNIIVLADHGMDQTSCDRVEYMTDYFPEINFYMYQGPAPRIRTRNIPQDFFTFNSEEIVRDLSCRKSDQHFKPYLTPDLPKRLHYAKNVRIDKVHLMVDRQWLAYRNKGSSNCEGGTHGYNNEFKSMEAIFLAHGPSFKEKTVIEPFENIEVYNLLCDLLHIQPAPNNGSHGSLNHLLKAPFYQPSHAEELSKSAGCGFTTPLPKDSLNCSCLALQTSGQEEQVNQRLNLSGGEVSATEKTNLPFGRPRVIQKNKDHCLLYHREYVSGFGKAMKMPMWSSYTVPKPGDTSSLPPTVPDCLRADVRVDPSESQKCSFYLADQNIDHGFLYPPAIKGNNESQYDALITSNLVPMYKEFKKMWDYFHKVLLIKYAIERNGVNVVSGPIFDYNYDGHFDAPDEITNYVAGTDVPVPTHYFVVLTSCKNKTHTPDSCPGWLDVLPFVVPHRPTNVESCPENKAEDLWVEERFKAHIARVRDVELLTGLDFYQEKTQPVSEILQLKTYLPTFETII</sequence>
<feature type="chain" id="PRO_0000188571" description="Ectonucleotide pyrophosphatase/phosphodiesterase family member 3">
    <location>
        <begin position="1"/>
        <end position="875"/>
    </location>
</feature>
<feature type="topological domain" description="Cytoplasmic" evidence="4">
    <location>
        <begin position="1"/>
        <end position="11"/>
    </location>
</feature>
<feature type="transmembrane region" description="Helical; Signal-anchor for type II membrane protein" evidence="4">
    <location>
        <begin position="12"/>
        <end position="30"/>
    </location>
</feature>
<feature type="topological domain" description="Extracellular" evidence="4">
    <location>
        <begin position="31"/>
        <end position="875"/>
    </location>
</feature>
<feature type="domain" description="SMB 1" evidence="5">
    <location>
        <begin position="51"/>
        <end position="94"/>
    </location>
</feature>
<feature type="domain" description="SMB 2" evidence="5">
    <location>
        <begin position="95"/>
        <end position="139"/>
    </location>
</feature>
<feature type="region of interest" description="Phosphodiesterase" evidence="1">
    <location>
        <begin position="161"/>
        <end position="545"/>
    </location>
</feature>
<feature type="region of interest" description="Nuclease" evidence="1">
    <location>
        <begin position="582"/>
        <end position="875"/>
    </location>
</feature>
<feature type="short sequence motif" description="Cell attachment site" evidence="4">
    <location>
        <begin position="79"/>
        <end position="81"/>
    </location>
</feature>
<feature type="active site" description="Nucleophile" evidence="2">
    <location>
        <position position="206"/>
    </location>
</feature>
<feature type="binding site" evidence="1">
    <location>
        <position position="168"/>
    </location>
    <ligand>
        <name>Zn(2+)</name>
        <dbReference type="ChEBI" id="CHEBI:29105"/>
        <label>1</label>
        <note>catalytic</note>
    </ligand>
</feature>
<feature type="binding site" evidence="1">
    <location>
        <position position="205"/>
    </location>
    <ligand>
        <name>ATP</name>
        <dbReference type="ChEBI" id="CHEBI:30616"/>
    </ligand>
</feature>
<feature type="binding site" evidence="1">
    <location>
        <position position="206"/>
    </location>
    <ligand>
        <name>Zn(2+)</name>
        <dbReference type="ChEBI" id="CHEBI:29105"/>
        <label>1</label>
        <note>catalytic</note>
    </ligand>
</feature>
<feature type="binding site" evidence="1">
    <location>
        <position position="227"/>
    </location>
    <ligand>
        <name>ATP</name>
        <dbReference type="ChEBI" id="CHEBI:30616"/>
    </ligand>
</feature>
<feature type="binding site" evidence="1">
    <location>
        <position position="276"/>
    </location>
    <ligand>
        <name>ATP</name>
        <dbReference type="ChEBI" id="CHEBI:30616"/>
    </ligand>
</feature>
<feature type="binding site" evidence="1">
    <location>
        <position position="290"/>
    </location>
    <ligand>
        <name>ATP</name>
        <dbReference type="ChEBI" id="CHEBI:30616"/>
    </ligand>
</feature>
<feature type="binding site" evidence="1">
    <location>
        <position position="326"/>
    </location>
    <ligand>
        <name>Zn(2+)</name>
        <dbReference type="ChEBI" id="CHEBI:29105"/>
        <label>2</label>
        <note>catalytic</note>
    </ligand>
</feature>
<feature type="binding site" evidence="1">
    <location>
        <position position="330"/>
    </location>
    <ligand>
        <name>Zn(2+)</name>
        <dbReference type="ChEBI" id="CHEBI:29105"/>
        <label>2</label>
        <note>catalytic</note>
    </ligand>
</feature>
<feature type="binding site" evidence="1">
    <location>
        <position position="373"/>
    </location>
    <ligand>
        <name>Zn(2+)</name>
        <dbReference type="ChEBI" id="CHEBI:29105"/>
        <label>1</label>
        <note>catalytic</note>
    </ligand>
</feature>
<feature type="binding site" evidence="1">
    <location>
        <position position="374"/>
    </location>
    <ligand>
        <name>Zn(2+)</name>
        <dbReference type="ChEBI" id="CHEBI:29105"/>
        <label>1</label>
        <note>catalytic</note>
    </ligand>
</feature>
<feature type="binding site" evidence="1">
    <location>
        <position position="483"/>
    </location>
    <ligand>
        <name>Zn(2+)</name>
        <dbReference type="ChEBI" id="CHEBI:29105"/>
        <label>2</label>
        <note>catalytic</note>
    </ligand>
</feature>
<feature type="binding site" evidence="1">
    <location>
        <position position="752"/>
    </location>
    <ligand>
        <name>Ca(2+)</name>
        <dbReference type="ChEBI" id="CHEBI:29108"/>
    </ligand>
</feature>
<feature type="binding site" evidence="1">
    <location>
        <position position="754"/>
    </location>
    <ligand>
        <name>Ca(2+)</name>
        <dbReference type="ChEBI" id="CHEBI:29108"/>
    </ligand>
</feature>
<feature type="binding site" evidence="1">
    <location>
        <position position="756"/>
    </location>
    <ligand>
        <name>Ca(2+)</name>
        <dbReference type="ChEBI" id="CHEBI:29108"/>
    </ligand>
</feature>
<feature type="binding site" evidence="1">
    <location>
        <position position="758"/>
    </location>
    <ligand>
        <name>Ca(2+)</name>
        <dbReference type="ChEBI" id="CHEBI:29108"/>
    </ligand>
</feature>
<feature type="binding site" evidence="1">
    <location>
        <position position="760"/>
    </location>
    <ligand>
        <name>Ca(2+)</name>
        <dbReference type="ChEBI" id="CHEBI:29108"/>
    </ligand>
</feature>
<feature type="glycosylation site" description="N-linked (GlcNAc...) asparagine" evidence="4">
    <location>
        <position position="237"/>
    </location>
</feature>
<feature type="glycosylation site" description="N-linked (GlcNAc...) asparagine" evidence="4">
    <location>
        <position position="280"/>
    </location>
</feature>
<feature type="glycosylation site" description="N-linked (GlcNAc...) asparagine" evidence="4">
    <location>
        <position position="289"/>
    </location>
</feature>
<feature type="glycosylation site" description="N-linked (GlcNAc...) asparagine" evidence="4">
    <location>
        <position position="533"/>
    </location>
</feature>
<feature type="glycosylation site" description="N-linked (GlcNAc...) asparagine" evidence="4">
    <location>
        <position position="574"/>
    </location>
</feature>
<feature type="glycosylation site" description="N-linked (GlcNAc...) asparagine" evidence="4">
    <location>
        <position position="594"/>
    </location>
</feature>
<feature type="glycosylation site" description="N-linked (GlcNAc...) asparagine" evidence="4">
    <location>
        <position position="702"/>
    </location>
</feature>
<feature type="glycosylation site" description="N-linked (GlcNAc...) asparagine" evidence="4">
    <location>
        <position position="789"/>
    </location>
</feature>
<feature type="disulfide bond" evidence="5">
    <location>
        <begin position="55"/>
        <end position="72"/>
    </location>
</feature>
<feature type="disulfide bond" evidence="5">
    <location>
        <begin position="59"/>
        <end position="90"/>
    </location>
</feature>
<feature type="disulfide bond" evidence="5">
    <location>
        <begin position="70"/>
        <end position="83"/>
    </location>
</feature>
<feature type="disulfide bond" evidence="5">
    <location>
        <begin position="76"/>
        <end position="82"/>
    </location>
</feature>
<feature type="disulfide bond" evidence="5">
    <location>
        <begin position="99"/>
        <end position="116"/>
    </location>
</feature>
<feature type="disulfide bond" evidence="5">
    <location>
        <begin position="104"/>
        <end position="134"/>
    </location>
</feature>
<feature type="disulfide bond" evidence="5">
    <location>
        <begin position="114"/>
        <end position="127"/>
    </location>
</feature>
<feature type="disulfide bond" evidence="5">
    <location>
        <begin position="120"/>
        <end position="126"/>
    </location>
</feature>
<feature type="disulfide bond" evidence="5">
    <location>
        <begin position="145"/>
        <end position="191"/>
    </location>
</feature>
<feature type="disulfide bond" evidence="5">
    <location>
        <begin position="153"/>
        <end position="365"/>
    </location>
</feature>
<feature type="disulfide bond" evidence="5">
    <location>
        <begin position="381"/>
        <end position="478"/>
    </location>
</feature>
<feature type="disulfide bond" evidence="5">
    <location>
        <begin position="429"/>
        <end position="818"/>
    </location>
</feature>
<feature type="disulfide bond" evidence="1">
    <location>
        <begin position="562"/>
        <end position="623"/>
    </location>
</feature>
<feature type="disulfide bond" evidence="5">
    <location>
        <begin position="575"/>
        <end position="679"/>
    </location>
</feature>
<feature type="disulfide bond" evidence="5">
    <location>
        <begin position="577"/>
        <end position="664"/>
    </location>
</feature>
<feature type="disulfide bond" evidence="5">
    <location>
        <begin position="787"/>
        <end position="797"/>
    </location>
</feature>
<feature type="sequence variant">
    <original>K</original>
    <variation>E</variation>
    <location>
        <position position="124"/>
    </location>
</feature>
<feature type="sequence variant">
    <original>M</original>
    <variation>V</variation>
    <location>
        <position position="201"/>
    </location>
</feature>
<feature type="sequence variant">
    <original>SG</original>
    <variation>NR</variation>
    <location>
        <begin position="596"/>
        <end position="597"/>
    </location>
</feature>
<feature type="sequence conflict" description="In Ref. 3; BAA06333." evidence="12" ref="3">
    <original>A</original>
    <variation>T</variation>
    <location>
        <position position="111"/>
    </location>
</feature>
<feature type="sequence conflict" description="In Ref. 1; CAA88029." evidence="12" ref="1">
    <original>P</original>
    <variation>L</variation>
    <location>
        <position position="273"/>
    </location>
</feature>
<feature type="sequence conflict" description="In Ref. 3; BAA06333." evidence="12" ref="3">
    <original>SS</original>
    <variation>VP</variation>
    <location>
        <begin position="475"/>
        <end position="476"/>
    </location>
</feature>
<feature type="sequence conflict" description="In Ref. 3; BAA06333." evidence="12" ref="3">
    <original>N</original>
    <variation>KP</variation>
    <location>
        <position position="814"/>
    </location>
</feature>
<feature type="strand" evidence="19">
    <location>
        <begin position="66"/>
        <end position="69"/>
    </location>
</feature>
<feature type="helix" evidence="19">
    <location>
        <begin position="76"/>
        <end position="79"/>
    </location>
</feature>
<feature type="helix" evidence="19">
    <location>
        <begin position="86"/>
        <end position="90"/>
    </location>
</feature>
<feature type="helix" evidence="19">
    <location>
        <begin position="92"/>
        <end position="95"/>
    </location>
</feature>
<feature type="turn" evidence="19">
    <location>
        <begin position="101"/>
        <end position="105"/>
    </location>
</feature>
<feature type="strand" evidence="19">
    <location>
        <begin position="113"/>
        <end position="115"/>
    </location>
</feature>
<feature type="turn" evidence="19">
    <location>
        <begin position="118"/>
        <end position="124"/>
    </location>
</feature>
<feature type="helix" evidence="19">
    <location>
        <begin position="130"/>
        <end position="134"/>
    </location>
</feature>
<feature type="turn" evidence="19">
    <location>
        <begin position="140"/>
        <end position="142"/>
    </location>
</feature>
<feature type="strand" evidence="18">
    <location>
        <begin position="162"/>
        <end position="167"/>
    </location>
</feature>
<feature type="helix" evidence="18">
    <location>
        <begin position="172"/>
        <end position="178"/>
    </location>
</feature>
<feature type="helix" evidence="18">
    <location>
        <begin position="179"/>
        <end position="181"/>
    </location>
</feature>
<feature type="helix" evidence="18">
    <location>
        <begin position="183"/>
        <end position="191"/>
    </location>
</feature>
<feature type="strand" evidence="18">
    <location>
        <begin position="192"/>
        <end position="196"/>
    </location>
</feature>
<feature type="helix" evidence="18">
    <location>
        <begin position="206"/>
        <end position="215"/>
    </location>
</feature>
<feature type="helix" evidence="18">
    <location>
        <begin position="219"/>
        <end position="222"/>
    </location>
</feature>
<feature type="strand" evidence="18">
    <location>
        <begin position="227"/>
        <end position="231"/>
    </location>
</feature>
<feature type="turn" evidence="18">
    <location>
        <begin position="232"/>
        <end position="235"/>
    </location>
</feature>
<feature type="strand" evidence="18">
    <location>
        <begin position="236"/>
        <end position="238"/>
    </location>
</feature>
<feature type="strand" evidence="16">
    <location>
        <begin position="240"/>
        <end position="242"/>
    </location>
</feature>
<feature type="helix" evidence="18">
    <location>
        <begin position="243"/>
        <end position="246"/>
    </location>
</feature>
<feature type="helix" evidence="18">
    <location>
        <begin position="248"/>
        <end position="250"/>
    </location>
</feature>
<feature type="helix" evidence="18">
    <location>
        <begin position="256"/>
        <end position="261"/>
    </location>
</feature>
<feature type="turn" evidence="18">
    <location>
        <begin position="262"/>
        <end position="264"/>
    </location>
</feature>
<feature type="strand" evidence="18">
    <location>
        <begin position="267"/>
        <end position="271"/>
    </location>
</feature>
<feature type="turn" evidence="18">
    <location>
        <begin position="273"/>
        <end position="276"/>
    </location>
</feature>
<feature type="helix" evidence="16">
    <location>
        <begin position="279"/>
        <end position="281"/>
    </location>
</feature>
<feature type="strand" evidence="18">
    <location>
        <begin position="285"/>
        <end position="287"/>
    </location>
</feature>
<feature type="helix" evidence="18">
    <location>
        <begin position="296"/>
        <end position="307"/>
    </location>
</feature>
<feature type="turn" evidence="18">
    <location>
        <begin position="311"/>
        <end position="313"/>
    </location>
</feature>
<feature type="strand" evidence="18">
    <location>
        <begin position="316"/>
        <end position="322"/>
    </location>
</feature>
<feature type="helix" evidence="18">
    <location>
        <begin position="326"/>
        <end position="332"/>
    </location>
</feature>
<feature type="strand" evidence="18">
    <location>
        <begin position="334"/>
        <end position="336"/>
    </location>
</feature>
<feature type="helix" evidence="18">
    <location>
        <begin position="337"/>
        <end position="359"/>
    </location>
</feature>
<feature type="turn" evidence="18">
    <location>
        <begin position="363"/>
        <end position="365"/>
    </location>
</feature>
<feature type="strand" evidence="18">
    <location>
        <begin position="366"/>
        <end position="371"/>
    </location>
</feature>
<feature type="strand" evidence="18">
    <location>
        <begin position="377"/>
        <end position="379"/>
    </location>
</feature>
<feature type="strand" evidence="18">
    <location>
        <begin position="383"/>
        <end position="386"/>
    </location>
</feature>
<feature type="helix" evidence="18">
    <location>
        <begin position="387"/>
        <end position="389"/>
    </location>
</feature>
<feature type="strand" evidence="18">
    <location>
        <begin position="396"/>
        <end position="399"/>
    </location>
</feature>
<feature type="strand" evidence="18">
    <location>
        <begin position="401"/>
        <end position="403"/>
    </location>
</feature>
<feature type="strand" evidence="18">
    <location>
        <begin position="405"/>
        <end position="410"/>
    </location>
</feature>
<feature type="turn" evidence="18">
    <location>
        <begin position="411"/>
        <end position="417"/>
    </location>
</feature>
<feature type="helix" evidence="18">
    <location>
        <begin position="420"/>
        <end position="427"/>
    </location>
</feature>
<feature type="strand" evidence="18">
    <location>
        <begin position="435"/>
        <end position="440"/>
    </location>
</feature>
<feature type="helix" evidence="18">
    <location>
        <begin position="441"/>
        <end position="443"/>
    </location>
</feature>
<feature type="helix" evidence="18">
    <location>
        <begin position="446"/>
        <end position="448"/>
    </location>
</feature>
<feature type="strand" evidence="18">
    <location>
        <begin position="458"/>
        <end position="463"/>
    </location>
</feature>
<feature type="strand" evidence="18">
    <location>
        <begin position="468"/>
        <end position="472"/>
    </location>
</feature>
<feature type="strand" evidence="18">
    <location>
        <begin position="479"/>
        <end position="482"/>
    </location>
</feature>
<feature type="helix" evidence="18">
    <location>
        <begin position="490"/>
        <end position="492"/>
    </location>
</feature>
<feature type="strand" evidence="18">
    <location>
        <begin position="496"/>
        <end position="500"/>
    </location>
</feature>
<feature type="strand" evidence="18">
    <location>
        <begin position="507"/>
        <end position="509"/>
    </location>
</feature>
<feature type="helix" evidence="18">
    <location>
        <begin position="514"/>
        <end position="516"/>
    </location>
</feature>
<feature type="helix" evidence="18">
    <location>
        <begin position="517"/>
        <end position="524"/>
    </location>
</feature>
<feature type="turn" evidence="18">
    <location>
        <begin position="536"/>
        <end position="539"/>
    </location>
</feature>
<feature type="helix" evidence="18">
    <location>
        <begin position="540"/>
        <end position="542"/>
    </location>
</feature>
<feature type="strand" evidence="18">
    <location>
        <begin position="543"/>
        <end position="545"/>
    </location>
</feature>
<feature type="helix" evidence="18">
    <location>
        <begin position="589"/>
        <end position="593"/>
    </location>
</feature>
<feature type="helix" evidence="18">
    <location>
        <begin position="597"/>
        <end position="607"/>
    </location>
</feature>
<feature type="strand" evidence="18">
    <location>
        <begin position="622"/>
        <end position="626"/>
    </location>
</feature>
<feature type="strand" evidence="18">
    <location>
        <begin position="631"/>
        <end position="635"/>
    </location>
</feature>
<feature type="turn" evidence="18">
    <location>
        <begin position="636"/>
        <end position="639"/>
    </location>
</feature>
<feature type="strand" evidence="18">
    <location>
        <begin position="640"/>
        <end position="648"/>
    </location>
</feature>
<feature type="strand" evidence="17">
    <location>
        <begin position="654"/>
        <end position="656"/>
    </location>
</feature>
<feature type="strand" evidence="16">
    <location>
        <begin position="669"/>
        <end position="671"/>
    </location>
</feature>
<feature type="helix" evidence="18">
    <location>
        <begin position="673"/>
        <end position="675"/>
    </location>
</feature>
<feature type="helix" evidence="18">
    <location>
        <begin position="681"/>
        <end position="684"/>
    </location>
</feature>
<feature type="strand" evidence="18">
    <location>
        <begin position="686"/>
        <end position="694"/>
    </location>
</feature>
<feature type="helix" evidence="18">
    <location>
        <begin position="696"/>
        <end position="698"/>
    </location>
</feature>
<feature type="helix" evidence="18">
    <location>
        <begin position="702"/>
        <end position="705"/>
    </location>
</feature>
<feature type="turn" evidence="18">
    <location>
        <begin position="706"/>
        <end position="708"/>
    </location>
</feature>
<feature type="helix" evidence="18">
    <location>
        <begin position="711"/>
        <end position="713"/>
    </location>
</feature>
<feature type="strand" evidence="18">
    <location>
        <begin position="714"/>
        <end position="718"/>
    </location>
</feature>
<feature type="helix" evidence="18">
    <location>
        <begin position="719"/>
        <end position="730"/>
    </location>
</feature>
<feature type="helix" evidence="18">
    <location>
        <begin position="732"/>
        <end position="739"/>
    </location>
</feature>
<feature type="strand" evidence="18">
    <location>
        <begin position="742"/>
        <end position="750"/>
    </location>
</feature>
<feature type="strand" evidence="18">
    <location>
        <begin position="756"/>
        <end position="758"/>
    </location>
</feature>
<feature type="helix" evidence="18">
    <location>
        <begin position="762"/>
        <end position="764"/>
    </location>
</feature>
<feature type="strand" evidence="18">
    <location>
        <begin position="778"/>
        <end position="789"/>
    </location>
</feature>
<feature type="helix" evidence="18">
    <location>
        <begin position="794"/>
        <end position="796"/>
    </location>
</feature>
<feature type="strand" evidence="18">
    <location>
        <begin position="801"/>
        <end position="809"/>
    </location>
</feature>
<feature type="turn" evidence="18">
    <location>
        <begin position="815"/>
        <end position="817"/>
    </location>
</feature>
<feature type="helix" evidence="18">
    <location>
        <begin position="824"/>
        <end position="826"/>
    </location>
</feature>
<feature type="helix" evidence="18">
    <location>
        <begin position="828"/>
        <end position="834"/>
    </location>
</feature>
<feature type="helix" evidence="18">
    <location>
        <begin position="839"/>
        <end position="846"/>
    </location>
</feature>
<feature type="strand" evidence="18">
    <location>
        <begin position="854"/>
        <end position="856"/>
    </location>
</feature>
<feature type="helix" evidence="18">
    <location>
        <begin position="858"/>
        <end position="865"/>
    </location>
</feature>
<organism>
    <name type="scientific">Rattus norvegicus</name>
    <name type="common">Rat</name>
    <dbReference type="NCBI Taxonomy" id="10116"/>
    <lineage>
        <taxon>Eukaryota</taxon>
        <taxon>Metazoa</taxon>
        <taxon>Chordata</taxon>
        <taxon>Craniata</taxon>
        <taxon>Vertebrata</taxon>
        <taxon>Euteleostomi</taxon>
        <taxon>Mammalia</taxon>
        <taxon>Eutheria</taxon>
        <taxon>Euarchontoglires</taxon>
        <taxon>Glires</taxon>
        <taxon>Rodentia</taxon>
        <taxon>Myomorpha</taxon>
        <taxon>Muroidea</taxon>
        <taxon>Muridae</taxon>
        <taxon>Murinae</taxon>
        <taxon>Rattus</taxon>
    </lineage>
</organism>
<keyword id="KW-0002">3D-structure</keyword>
<keyword id="KW-0067">ATP-binding</keyword>
<keyword id="KW-0106">Calcium</keyword>
<keyword id="KW-1003">Cell membrane</keyword>
<keyword id="KW-0903">Direct protein sequencing</keyword>
<keyword id="KW-1015">Disulfide bond</keyword>
<keyword id="KW-0325">Glycoprotein</keyword>
<keyword id="KW-0378">Hydrolase</keyword>
<keyword id="KW-0472">Membrane</keyword>
<keyword id="KW-0479">Metal-binding</keyword>
<keyword id="KW-0547">Nucleotide-binding</keyword>
<keyword id="KW-1185">Reference proteome</keyword>
<keyword id="KW-0677">Repeat</keyword>
<keyword id="KW-0964">Secreted</keyword>
<keyword id="KW-0735">Signal-anchor</keyword>
<keyword id="KW-0812">Transmembrane</keyword>
<keyword id="KW-1133">Transmembrane helix</keyword>
<keyword id="KW-0862">Zinc</keyword>
<reference key="1">
    <citation type="journal article" date="1995" name="J. Biol. Chem.">
        <title>Affinity purification and cDNA cloning of rat neural differentiation and tumor cell surface antigen gp130RB13-6 reveals relationship to human and murine PC-1.</title>
        <authorList>
            <person name="Deissler H."/>
            <person name="Lottspeich F."/>
            <person name="Rajewsky M.F."/>
        </authorList>
    </citation>
    <scope>NUCLEOTIDE SEQUENCE [MRNA]</scope>
    <scope>PROTEIN SEQUENCE OF 331-339; 473-504; 544-558 AND 605-618</scope>
    <scope>SUBCELLULAR LOCATION</scope>
    <scope>GLYCOSYLATION</scope>
    <source>
        <strain>Sprague-Dawley</strain>
        <tissue>Fetal brain</tissue>
    </source>
</reference>
<reference key="2">
    <citation type="journal article" date="1997" name="Hepatology">
        <title>Biochemical and molecular identification of distinct forms of alkaline phosphodiesterase I expressed on the apical and basolateral plasma membrane surfaces of rat hepatocytes.</title>
        <authorList>
            <person name="Scott L.J."/>
            <person name="Delautier D."/>
            <person name="Meerson N.R."/>
            <person name="Trugnan G."/>
            <person name="Goding J.W."/>
            <person name="Maurice M."/>
        </authorList>
    </citation>
    <scope>NUCLEOTIDE SEQUENCE [MRNA]</scope>
    <scope>PROTEIN SEQUENCE OF 494-503 AND 726-746</scope>
    <scope>CATALYTIC ACTIVITY</scope>
    <scope>SUBCELLULAR LOCATION</scope>
    <scope>TISSUE SPECIFICITY</scope>
    <scope>GLYCOSYLATION</scope>
    <source>
        <strain>Sprague-Dawley</strain>
        <tissue>Intestine</tissue>
    </source>
</reference>
<reference key="3">
    <citation type="submission" date="1994-05" db="EMBL/GenBank/DDBJ databases">
        <title>Molecular cloning of phosphodiesterase I cDNA from rat small intestine.</title>
        <authorList>
            <person name="Sano K."/>
        </authorList>
    </citation>
    <scope>NUCLEOTIDE SEQUENCE [MRNA]</scope>
    <source>
        <strain>Sprague-Dawley</strain>
        <tissue>Small intestine</tissue>
    </source>
</reference>
<reference key="4">
    <citation type="journal article" date="2004" name="Genome Res.">
        <title>The status, quality, and expansion of the NIH full-length cDNA project: the Mammalian Gene Collection (MGC).</title>
        <authorList>
            <consortium name="The MGC Project Team"/>
        </authorList>
    </citation>
    <scope>NUCLEOTIDE SEQUENCE [LARGE SCALE MRNA]</scope>
    <source>
        <tissue>Placenta</tissue>
    </source>
</reference>
<reference key="5">
    <citation type="journal article" date="2000" name="J. Cell Sci.">
        <title>Intracellular traffic of the ecto-nucleotide pyrophosphatase/phosphodiesterase NPP3 to the apical plasma membrane of MDCK and Caco-2 cells: apical targeting occurs in the absence of N-glycosylation.</title>
        <authorList>
            <person name="Meerson N.R."/>
            <person name="Bello V."/>
            <person name="Delaunay J.-L."/>
            <person name="Slimane T.A."/>
            <person name="Delautier D."/>
            <person name="Lenoir C."/>
            <person name="Trugnan G."/>
            <person name="Maurice M."/>
        </authorList>
    </citation>
    <scope>SUBCELLULAR LOCATION</scope>
    <scope>GLYCOSYLATION</scope>
</reference>
<reference key="6">
    <citation type="journal article" date="2012" name="Nat. Commun.">
        <title>Quantitative maps of protein phosphorylation sites across 14 different rat organs and tissues.</title>
        <authorList>
            <person name="Lundby A."/>
            <person name="Secher A."/>
            <person name="Lage K."/>
            <person name="Nordsborg N.B."/>
            <person name="Dmytriyev A."/>
            <person name="Lundby C."/>
            <person name="Olsen J.V."/>
        </authorList>
    </citation>
    <scope>IDENTIFICATION BY MASS SPECTROMETRY [LARGE SCALE ANALYSIS]</scope>
</reference>
<evidence type="ECO:0000250" key="1">
    <source>
        <dbReference type="UniProtKB" id="O14638"/>
    </source>
</evidence>
<evidence type="ECO:0000250" key="2">
    <source>
        <dbReference type="UniProtKB" id="P15396"/>
    </source>
</evidence>
<evidence type="ECO:0000250" key="3">
    <source>
        <dbReference type="UniProtKB" id="Q6DYE8"/>
    </source>
</evidence>
<evidence type="ECO:0000255" key="4"/>
<evidence type="ECO:0000255" key="5">
    <source>
        <dbReference type="PROSITE-ProRule" id="PRU00350"/>
    </source>
</evidence>
<evidence type="ECO:0000269" key="6">
    <source>
    </source>
</evidence>
<evidence type="ECO:0000269" key="7">
    <source>
    </source>
</evidence>
<evidence type="ECO:0000269" key="8">
    <source>
    </source>
</evidence>
<evidence type="ECO:0000303" key="9">
    <source>
    </source>
</evidence>
<evidence type="ECO:0000303" key="10">
    <source>
    </source>
</evidence>
<evidence type="ECO:0000303" key="11">
    <source>
    </source>
</evidence>
<evidence type="ECO:0000305" key="12"/>
<evidence type="ECO:0000305" key="13">
    <source>
    </source>
</evidence>
<evidence type="ECO:0000305" key="14">
    <source>
    </source>
</evidence>
<evidence type="ECO:0000312" key="15">
    <source>
        <dbReference type="RGD" id="708511"/>
    </source>
</evidence>
<evidence type="ECO:0007829" key="16">
    <source>
        <dbReference type="PDB" id="6F2T"/>
    </source>
</evidence>
<evidence type="ECO:0007829" key="17">
    <source>
        <dbReference type="PDB" id="6F2V"/>
    </source>
</evidence>
<evidence type="ECO:0007829" key="18">
    <source>
        <dbReference type="PDB" id="6F30"/>
    </source>
</evidence>
<evidence type="ECO:0007829" key="19">
    <source>
        <dbReference type="PDB" id="6G4G"/>
    </source>
</evidence>
<comment type="function">
    <text evidence="1 3 8">Hydrolase that metabolizes extracellular nucleotides, including ATP, GTP, UTP and CTP (By similarity). Limits mast cells and basophils response during inflammation and during the chronic phases of allergic responses by eliminating extracellular ATP, a signaling molecule activating these cells in an autocrine manner. Metabolizes extracellular ATP in the lumen of the small intestine, and thereby prevents ATP-induced apoptosis of intestinal plasmacytoid dendritic cells (By similarity). Has a broad specificity and can also hydrolyze UDP-GlcNAc into UMP and GlcNAc-1-phosphate and potentially several other intracellular nucleotide sugars, including UDP-GalNAc, CMP-NeuAc, GDP-Fuc, and UDP-GlcA. Thereby, could modulate glycan biosynthesis and protein glycosylation (By similarity). Can hydrolyze extracellular dinucleoside polyphosphates, including the vasoactive adenosine polyphosphates as well. In addition, displays an alkaline phosphodiesterase activity in vitro (PubMed:9096610).</text>
</comment>
<comment type="catalytic activity">
    <reaction evidence="8">
        <text>Hydrolytically removes 5'-nucleotides successively from the 3'-hydroxy termini of 3'-hydroxy-terminated oligonucleotides.</text>
        <dbReference type="EC" id="3.1.4.1"/>
    </reaction>
</comment>
<comment type="catalytic activity">
    <reaction evidence="1">
        <text>a ribonucleoside 5'-triphosphate + H2O = a ribonucleoside 5'-phosphate + diphosphate + H(+)</text>
        <dbReference type="Rhea" id="RHEA:23996"/>
        <dbReference type="ChEBI" id="CHEBI:15377"/>
        <dbReference type="ChEBI" id="CHEBI:15378"/>
        <dbReference type="ChEBI" id="CHEBI:33019"/>
        <dbReference type="ChEBI" id="CHEBI:58043"/>
        <dbReference type="ChEBI" id="CHEBI:61557"/>
        <dbReference type="EC" id="3.6.1.9"/>
    </reaction>
    <physiologicalReaction direction="left-to-right" evidence="1">
        <dbReference type="Rhea" id="RHEA:23997"/>
    </physiologicalReaction>
</comment>
<comment type="catalytic activity">
    <reaction evidence="1">
        <text>ATP + H2O = AMP + diphosphate + H(+)</text>
        <dbReference type="Rhea" id="RHEA:14245"/>
        <dbReference type="ChEBI" id="CHEBI:15377"/>
        <dbReference type="ChEBI" id="CHEBI:15378"/>
        <dbReference type="ChEBI" id="CHEBI:30616"/>
        <dbReference type="ChEBI" id="CHEBI:33019"/>
        <dbReference type="ChEBI" id="CHEBI:456215"/>
        <dbReference type="EC" id="3.6.1.9"/>
    </reaction>
    <physiologicalReaction direction="left-to-right" evidence="1">
        <dbReference type="Rhea" id="RHEA:14246"/>
    </physiologicalReaction>
</comment>
<comment type="catalytic activity">
    <reaction evidence="1">
        <text>CTP + H2O = CMP + diphosphate + H(+)</text>
        <dbReference type="Rhea" id="RHEA:27762"/>
        <dbReference type="ChEBI" id="CHEBI:15377"/>
        <dbReference type="ChEBI" id="CHEBI:15378"/>
        <dbReference type="ChEBI" id="CHEBI:33019"/>
        <dbReference type="ChEBI" id="CHEBI:37563"/>
        <dbReference type="ChEBI" id="CHEBI:60377"/>
        <dbReference type="EC" id="3.6.1.9"/>
    </reaction>
    <physiologicalReaction direction="left-to-right" evidence="1">
        <dbReference type="Rhea" id="RHEA:27763"/>
    </physiologicalReaction>
</comment>
<comment type="catalytic activity">
    <reaction evidence="1">
        <text>GTP + H2O = GMP + diphosphate + H(+)</text>
        <dbReference type="Rhea" id="RHEA:29391"/>
        <dbReference type="ChEBI" id="CHEBI:15377"/>
        <dbReference type="ChEBI" id="CHEBI:15378"/>
        <dbReference type="ChEBI" id="CHEBI:33019"/>
        <dbReference type="ChEBI" id="CHEBI:37565"/>
        <dbReference type="ChEBI" id="CHEBI:58115"/>
        <dbReference type="EC" id="3.6.1.9"/>
    </reaction>
    <physiologicalReaction direction="left-to-right" evidence="1">
        <dbReference type="Rhea" id="RHEA:29392"/>
    </physiologicalReaction>
</comment>
<comment type="catalytic activity">
    <reaction evidence="1">
        <text>UTP + H2O = UMP + diphosphate + H(+)</text>
        <dbReference type="Rhea" id="RHEA:29395"/>
        <dbReference type="ChEBI" id="CHEBI:15377"/>
        <dbReference type="ChEBI" id="CHEBI:15378"/>
        <dbReference type="ChEBI" id="CHEBI:33019"/>
        <dbReference type="ChEBI" id="CHEBI:46398"/>
        <dbReference type="ChEBI" id="CHEBI:57865"/>
        <dbReference type="EC" id="3.6.1.9"/>
    </reaction>
    <physiologicalReaction direction="left-to-right" evidence="1">
        <dbReference type="Rhea" id="RHEA:29396"/>
    </physiologicalReaction>
</comment>
<comment type="catalytic activity">
    <reaction evidence="3">
        <text>UDP-N-acetyl-alpha-D-glucosamine + H2O = N-acetyl-alpha-D-glucosamine 1-phosphate + UMP + 2 H(+)</text>
        <dbReference type="Rhea" id="RHEA:29547"/>
        <dbReference type="ChEBI" id="CHEBI:15377"/>
        <dbReference type="ChEBI" id="CHEBI:15378"/>
        <dbReference type="ChEBI" id="CHEBI:57705"/>
        <dbReference type="ChEBI" id="CHEBI:57776"/>
        <dbReference type="ChEBI" id="CHEBI:57865"/>
    </reaction>
    <physiologicalReaction direction="left-to-right" evidence="3">
        <dbReference type="Rhea" id="RHEA:29548"/>
    </physiologicalReaction>
</comment>
<comment type="catalytic activity">
    <reaction evidence="1">
        <text>P(1),P(3)-bis(5'-adenosyl) triphosphate + H2O = AMP + ADP + 2 H(+)</text>
        <dbReference type="Rhea" id="RHEA:13893"/>
        <dbReference type="ChEBI" id="CHEBI:15377"/>
        <dbReference type="ChEBI" id="CHEBI:15378"/>
        <dbReference type="ChEBI" id="CHEBI:58529"/>
        <dbReference type="ChEBI" id="CHEBI:456215"/>
        <dbReference type="ChEBI" id="CHEBI:456216"/>
    </reaction>
    <physiologicalReaction direction="left-to-right" evidence="1">
        <dbReference type="Rhea" id="RHEA:13894"/>
    </physiologicalReaction>
</comment>
<comment type="catalytic activity">
    <reaction evidence="1">
        <text>P(1),P(4)-bis(5'-adenosyl) tetraphosphate + H2O = AMP + ATP + 2 H(+)</text>
        <dbReference type="Rhea" id="RHEA:32039"/>
        <dbReference type="ChEBI" id="CHEBI:15377"/>
        <dbReference type="ChEBI" id="CHEBI:15378"/>
        <dbReference type="ChEBI" id="CHEBI:30616"/>
        <dbReference type="ChEBI" id="CHEBI:58141"/>
        <dbReference type="ChEBI" id="CHEBI:456215"/>
    </reaction>
    <physiologicalReaction direction="left-to-right" evidence="1">
        <dbReference type="Rhea" id="RHEA:32040"/>
    </physiologicalReaction>
</comment>
<comment type="catalytic activity">
    <reaction evidence="1">
        <text>P(1),P(5)-bis(5'-adenosyl) pentaphosphate + H2O = adenosine 5'-tetraphosphate + AMP + 2 H(+)</text>
        <dbReference type="Rhea" id="RHEA:32051"/>
        <dbReference type="ChEBI" id="CHEBI:15377"/>
        <dbReference type="ChEBI" id="CHEBI:15378"/>
        <dbReference type="ChEBI" id="CHEBI:58450"/>
        <dbReference type="ChEBI" id="CHEBI:62041"/>
        <dbReference type="ChEBI" id="CHEBI:456215"/>
    </reaction>
    <physiologicalReaction direction="left-to-right" evidence="1">
        <dbReference type="Rhea" id="RHEA:32052"/>
    </physiologicalReaction>
</comment>
<comment type="catalytic activity">
    <reaction evidence="1">
        <text>P(1),P(4)-bis(5'-guanosyl) tetraphosphate + H2O = GMP + GTP + 2 H(+)</text>
        <dbReference type="Rhea" id="RHEA:22484"/>
        <dbReference type="ChEBI" id="CHEBI:15377"/>
        <dbReference type="ChEBI" id="CHEBI:15378"/>
        <dbReference type="ChEBI" id="CHEBI:37565"/>
        <dbReference type="ChEBI" id="CHEBI:57553"/>
        <dbReference type="ChEBI" id="CHEBI:58115"/>
    </reaction>
</comment>
<comment type="cofactor">
    <cofactor evidence="1">
        <name>Zn(2+)</name>
        <dbReference type="ChEBI" id="CHEBI:29105"/>
    </cofactor>
    <text evidence="1">Binds 2 zinc ions per subunit.</text>
</comment>
<comment type="subunit">
    <text evidence="1">Monomer and homodimer.</text>
</comment>
<comment type="subcellular location">
    <subcellularLocation>
        <location evidence="7">Cell membrane</location>
        <topology evidence="1">Single-pass type II membrane protein</topology>
    </subcellularLocation>
    <subcellularLocation>
        <location evidence="6 8">Apical cell membrane</location>
        <topology evidence="1">Single-pass type II membrane protein</topology>
    </subcellularLocation>
    <subcellularLocation>
        <location evidence="1">Secreted</location>
    </subcellularLocation>
    <text evidence="1">Detected at the cell surface of basophils. Detected at the apical plasma membrane of bile duct cells. Located to the apical surface in intestinal and kidney epithelial cells. Secreted in serum, and in lumen of epithelial cells.</text>
</comment>
<comment type="tissue specificity">
    <text evidence="8">Detected in intestinal epithelium and liver (at protein level).</text>
</comment>
<comment type="PTM">
    <text>The N-terminal is blocked.</text>
</comment>
<comment type="PTM">
    <text evidence="6 7 8">N-glycosylated (PubMed:7730366, PubMed:9096610). N-glycosylation is necessary for normal transport to the cell membrane, but is not the apical targeting signal (PubMed:11069764).</text>
</comment>
<comment type="similarity">
    <text evidence="12">Belongs to the nucleotide pyrophosphatase/phosphodiesterase family.</text>
</comment>
<protein>
    <recommendedName>
        <fullName evidence="13">Ectonucleotide pyrophosphatase/phosphodiesterase family member 3</fullName>
        <shortName>E-NPP 3</shortName>
    </recommendedName>
    <alternativeName>
        <fullName evidence="14">Alkaline phosphodiesterase I</fullName>
        <ecNumber evidence="8">3.1.4.1</ecNumber>
    </alternativeName>
    <alternativeName>
        <fullName evidence="11">B10</fullName>
    </alternativeName>
    <alternativeName>
        <fullName evidence="1">Dinucleoside polyphosphatase</fullName>
        <ecNumber evidence="1">3.6.1.-</ecNumber>
    </alternativeName>
    <alternativeName>
        <fullName evidence="12">Nucleotide diphosphatase</fullName>
    </alternativeName>
    <alternativeName>
        <fullName evidence="1">Nucleotide pyrophosphatase</fullName>
        <shortName>NPPase</shortName>
        <ecNumber evidence="1">3.6.1.9</ecNumber>
    </alternativeName>
    <alternativeName>
        <fullName>Phosphodiesterase I beta</fullName>
        <shortName>PD-Ibeta</shortName>
    </alternativeName>
    <alternativeName>
        <fullName>Phosphodiesterase I/nucleotide pyrophosphatase 3</fullName>
    </alternativeName>
    <alternativeName>
        <fullName evidence="10">RB13-6 antigen</fullName>
    </alternativeName>
    <cdAntigenName>CD203c</cdAntigenName>
</protein>
<name>ENPP3_RAT</name>
<gene>
    <name evidence="15" type="primary">Enpp3</name>
    <name evidence="9" type="synonym">Npp3</name>
    <name type="synonym">Pdnp3</name>
</gene>